<name>GSA_HELHP</name>
<protein>
    <recommendedName>
        <fullName evidence="1">Glutamate-1-semialdehyde 2,1-aminomutase</fullName>
        <shortName evidence="1">GSA</shortName>
        <ecNumber evidence="1">5.4.3.8</ecNumber>
    </recommendedName>
    <alternativeName>
        <fullName evidence="1">Glutamate-1-semialdehyde aminotransferase</fullName>
        <shortName evidence="1">GSA-AT</shortName>
    </alternativeName>
</protein>
<organism>
    <name type="scientific">Helicobacter hepaticus (strain ATCC 51449 / 3B1)</name>
    <dbReference type="NCBI Taxonomy" id="235279"/>
    <lineage>
        <taxon>Bacteria</taxon>
        <taxon>Pseudomonadati</taxon>
        <taxon>Campylobacterota</taxon>
        <taxon>Epsilonproteobacteria</taxon>
        <taxon>Campylobacterales</taxon>
        <taxon>Helicobacteraceae</taxon>
        <taxon>Helicobacter</taxon>
    </lineage>
</organism>
<reference key="1">
    <citation type="journal article" date="2003" name="Proc. Natl. Acad. Sci. U.S.A.">
        <title>The complete genome sequence of the carcinogenic bacterium Helicobacter hepaticus.</title>
        <authorList>
            <person name="Suerbaum S."/>
            <person name="Josenhans C."/>
            <person name="Sterzenbach T."/>
            <person name="Drescher B."/>
            <person name="Brandt P."/>
            <person name="Bell M."/>
            <person name="Droege M."/>
            <person name="Fartmann B."/>
            <person name="Fischer H.-P."/>
            <person name="Ge Z."/>
            <person name="Hoerster A."/>
            <person name="Holland R."/>
            <person name="Klein K."/>
            <person name="Koenig J."/>
            <person name="Macko L."/>
            <person name="Mendz G.L."/>
            <person name="Nyakatura G."/>
            <person name="Schauer D.B."/>
            <person name="Shen Z."/>
            <person name="Weber J."/>
            <person name="Frosch M."/>
            <person name="Fox J.G."/>
        </authorList>
    </citation>
    <scope>NUCLEOTIDE SEQUENCE [LARGE SCALE GENOMIC DNA]</scope>
    <source>
        <strain>ATCC 51449 / 3B1</strain>
    </source>
</reference>
<comment type="catalytic activity">
    <reaction evidence="1">
        <text>(S)-4-amino-5-oxopentanoate = 5-aminolevulinate</text>
        <dbReference type="Rhea" id="RHEA:14265"/>
        <dbReference type="ChEBI" id="CHEBI:57501"/>
        <dbReference type="ChEBI" id="CHEBI:356416"/>
        <dbReference type="EC" id="5.4.3.8"/>
    </reaction>
</comment>
<comment type="cofactor">
    <cofactor evidence="1">
        <name>pyridoxal 5'-phosphate</name>
        <dbReference type="ChEBI" id="CHEBI:597326"/>
    </cofactor>
</comment>
<comment type="pathway">
    <text evidence="1">Porphyrin-containing compound metabolism; protoporphyrin-IX biosynthesis; 5-aminolevulinate from L-glutamyl-tRNA(Glu): step 2/2.</text>
</comment>
<comment type="subunit">
    <text evidence="1">Homodimer.</text>
</comment>
<comment type="subcellular location">
    <subcellularLocation>
        <location evidence="1">Cytoplasm</location>
    </subcellularLocation>
</comment>
<comment type="similarity">
    <text evidence="1">Belongs to the class-III pyridoxal-phosphate-dependent aminotransferase family. HemL subfamily.</text>
</comment>
<accession>Q7VHK3</accession>
<proteinExistence type="inferred from homology"/>
<evidence type="ECO:0000255" key="1">
    <source>
        <dbReference type="HAMAP-Rule" id="MF_00375"/>
    </source>
</evidence>
<keyword id="KW-0963">Cytoplasm</keyword>
<keyword id="KW-0413">Isomerase</keyword>
<keyword id="KW-0627">Porphyrin biosynthesis</keyword>
<keyword id="KW-0663">Pyridoxal phosphate</keyword>
<keyword id="KW-1185">Reference proteome</keyword>
<sequence>MDILQSINDFNEAKQVIPGGVNSPVRAFGSVGGTPRFIAKGKGAYIYDEDDNEYIDFVQSWGPLIFGHANEVIESALSLAIKDGLSFGAPTEKETTLVKQIIALSGSAEKMRLVNSGTEATMSALRLARAYSNKDDIIKFEGCYHGHSDSLLVSAGSGCATFGTPSSPGVPNDITKHTLVARYNDIESVRACFEQSKNVACVIIEALAGNMGFVPADKKFMQDLRALCDEYNALLIIDEVMSGFRAGLKGAIGLYDVQADLVTYGKVIGGGMPLAAFGGRADIMDMLSPVGGVYQAGTLSGNPIAVSAGLATLLQIKANPTLYEHLEVLAKRLIKGLKEAAQSYEIPLQVDCRGSMFGFFFNQKEVKNFDDAKCSDTAMFARFHQKMLDKGVYFACSQFETGFICSAMNEMIIDEVIMKAKAVFGEITHEIESRI</sequence>
<gene>
    <name evidence="1" type="primary">hemL</name>
    <name type="ordered locus">HH_0964</name>
</gene>
<dbReference type="EC" id="5.4.3.8" evidence="1"/>
<dbReference type="EMBL" id="AE017125">
    <property type="protein sequence ID" value="AAP77561.1"/>
    <property type="molecule type" value="Genomic_DNA"/>
</dbReference>
<dbReference type="RefSeq" id="WP_011115804.1">
    <property type="nucleotide sequence ID" value="NC_004917.1"/>
</dbReference>
<dbReference type="SMR" id="Q7VHK3"/>
<dbReference type="STRING" id="235279.HH_0964"/>
<dbReference type="KEGG" id="hhe:HH_0964"/>
<dbReference type="eggNOG" id="COG0001">
    <property type="taxonomic scope" value="Bacteria"/>
</dbReference>
<dbReference type="HOGENOM" id="CLU_016922_1_5_7"/>
<dbReference type="OrthoDB" id="9801052at2"/>
<dbReference type="UniPathway" id="UPA00251">
    <property type="reaction ID" value="UER00317"/>
</dbReference>
<dbReference type="Proteomes" id="UP000002495">
    <property type="component" value="Chromosome"/>
</dbReference>
<dbReference type="GO" id="GO:0005737">
    <property type="term" value="C:cytoplasm"/>
    <property type="evidence" value="ECO:0007669"/>
    <property type="project" value="UniProtKB-SubCell"/>
</dbReference>
<dbReference type="GO" id="GO:0042286">
    <property type="term" value="F:glutamate-1-semialdehyde 2,1-aminomutase activity"/>
    <property type="evidence" value="ECO:0007669"/>
    <property type="project" value="UniProtKB-UniRule"/>
</dbReference>
<dbReference type="GO" id="GO:0030170">
    <property type="term" value="F:pyridoxal phosphate binding"/>
    <property type="evidence" value="ECO:0007669"/>
    <property type="project" value="InterPro"/>
</dbReference>
<dbReference type="GO" id="GO:0008483">
    <property type="term" value="F:transaminase activity"/>
    <property type="evidence" value="ECO:0007669"/>
    <property type="project" value="InterPro"/>
</dbReference>
<dbReference type="GO" id="GO:0006782">
    <property type="term" value="P:protoporphyrinogen IX biosynthetic process"/>
    <property type="evidence" value="ECO:0007669"/>
    <property type="project" value="UniProtKB-UniRule"/>
</dbReference>
<dbReference type="CDD" id="cd00610">
    <property type="entry name" value="OAT_like"/>
    <property type="match status" value="1"/>
</dbReference>
<dbReference type="FunFam" id="3.40.640.10:FF:000021">
    <property type="entry name" value="Glutamate-1-semialdehyde 2,1-aminomutase"/>
    <property type="match status" value="1"/>
</dbReference>
<dbReference type="Gene3D" id="3.90.1150.10">
    <property type="entry name" value="Aspartate Aminotransferase, domain 1"/>
    <property type="match status" value="1"/>
</dbReference>
<dbReference type="Gene3D" id="3.40.640.10">
    <property type="entry name" value="Type I PLP-dependent aspartate aminotransferase-like (Major domain)"/>
    <property type="match status" value="1"/>
</dbReference>
<dbReference type="HAMAP" id="MF_00375">
    <property type="entry name" value="HemL_aminotrans_3"/>
    <property type="match status" value="1"/>
</dbReference>
<dbReference type="InterPro" id="IPR004639">
    <property type="entry name" value="4pyrrol_synth_GluAld_NH2Trfase"/>
</dbReference>
<dbReference type="InterPro" id="IPR005814">
    <property type="entry name" value="Aminotrans_3"/>
</dbReference>
<dbReference type="InterPro" id="IPR049704">
    <property type="entry name" value="Aminotrans_3_PPA_site"/>
</dbReference>
<dbReference type="InterPro" id="IPR015424">
    <property type="entry name" value="PyrdxlP-dep_Trfase"/>
</dbReference>
<dbReference type="InterPro" id="IPR015421">
    <property type="entry name" value="PyrdxlP-dep_Trfase_major"/>
</dbReference>
<dbReference type="InterPro" id="IPR015422">
    <property type="entry name" value="PyrdxlP-dep_Trfase_small"/>
</dbReference>
<dbReference type="NCBIfam" id="TIGR00713">
    <property type="entry name" value="hemL"/>
    <property type="match status" value="1"/>
</dbReference>
<dbReference type="NCBIfam" id="NF000818">
    <property type="entry name" value="PRK00062.1"/>
    <property type="match status" value="1"/>
</dbReference>
<dbReference type="PANTHER" id="PTHR43713">
    <property type="entry name" value="GLUTAMATE-1-SEMIALDEHYDE 2,1-AMINOMUTASE"/>
    <property type="match status" value="1"/>
</dbReference>
<dbReference type="PANTHER" id="PTHR43713:SF3">
    <property type="entry name" value="GLUTAMATE-1-SEMIALDEHYDE 2,1-AMINOMUTASE 1, CHLOROPLASTIC-RELATED"/>
    <property type="match status" value="1"/>
</dbReference>
<dbReference type="Pfam" id="PF00202">
    <property type="entry name" value="Aminotran_3"/>
    <property type="match status" value="1"/>
</dbReference>
<dbReference type="SUPFAM" id="SSF53383">
    <property type="entry name" value="PLP-dependent transferases"/>
    <property type="match status" value="1"/>
</dbReference>
<dbReference type="PROSITE" id="PS00600">
    <property type="entry name" value="AA_TRANSFER_CLASS_3"/>
    <property type="match status" value="1"/>
</dbReference>
<feature type="chain" id="PRO_0000120413" description="Glutamate-1-semialdehyde 2,1-aminomutase">
    <location>
        <begin position="1"/>
        <end position="435"/>
    </location>
</feature>
<feature type="modified residue" description="N6-(pyridoxal phosphate)lysine" evidence="1">
    <location>
        <position position="266"/>
    </location>
</feature>